<name>RSMG_MOOTA</name>
<proteinExistence type="inferred from homology"/>
<keyword id="KW-0963">Cytoplasm</keyword>
<keyword id="KW-0489">Methyltransferase</keyword>
<keyword id="KW-0698">rRNA processing</keyword>
<keyword id="KW-0949">S-adenosyl-L-methionine</keyword>
<keyword id="KW-0808">Transferase</keyword>
<protein>
    <recommendedName>
        <fullName evidence="1">Ribosomal RNA small subunit methyltransferase G</fullName>
        <ecNumber evidence="1">2.1.1.-</ecNumber>
    </recommendedName>
    <alternativeName>
        <fullName evidence="1">16S rRNA 7-methylguanosine methyltransferase</fullName>
        <shortName evidence="1">16S rRNA m7G methyltransferase</shortName>
    </alternativeName>
</protein>
<dbReference type="EC" id="2.1.1.-" evidence="1"/>
<dbReference type="EMBL" id="CP000232">
    <property type="protein sequence ID" value="ABC20799.1"/>
    <property type="molecule type" value="Genomic_DNA"/>
</dbReference>
<dbReference type="RefSeq" id="YP_431342.1">
    <property type="nucleotide sequence ID" value="NC_007644.1"/>
</dbReference>
<dbReference type="SMR" id="Q2RFJ0"/>
<dbReference type="STRING" id="264732.Moth_2517"/>
<dbReference type="EnsemblBacteria" id="ABC20799">
    <property type="protein sequence ID" value="ABC20799"/>
    <property type="gene ID" value="Moth_2517"/>
</dbReference>
<dbReference type="KEGG" id="mta:Moth_2517"/>
<dbReference type="PATRIC" id="fig|264732.11.peg.2740"/>
<dbReference type="eggNOG" id="COG0357">
    <property type="taxonomic scope" value="Bacteria"/>
</dbReference>
<dbReference type="HOGENOM" id="CLU_065341_0_0_9"/>
<dbReference type="OrthoDB" id="9808773at2"/>
<dbReference type="GO" id="GO:0005829">
    <property type="term" value="C:cytosol"/>
    <property type="evidence" value="ECO:0007669"/>
    <property type="project" value="TreeGrafter"/>
</dbReference>
<dbReference type="GO" id="GO:0070043">
    <property type="term" value="F:rRNA (guanine-N7-)-methyltransferase activity"/>
    <property type="evidence" value="ECO:0007669"/>
    <property type="project" value="UniProtKB-UniRule"/>
</dbReference>
<dbReference type="FunFam" id="3.40.50.150:FF:000041">
    <property type="entry name" value="Ribosomal RNA small subunit methyltransferase G"/>
    <property type="match status" value="1"/>
</dbReference>
<dbReference type="Gene3D" id="3.40.50.150">
    <property type="entry name" value="Vaccinia Virus protein VP39"/>
    <property type="match status" value="1"/>
</dbReference>
<dbReference type="HAMAP" id="MF_00074">
    <property type="entry name" value="16SrRNA_methyltr_G"/>
    <property type="match status" value="1"/>
</dbReference>
<dbReference type="InterPro" id="IPR003682">
    <property type="entry name" value="rRNA_ssu_MeTfrase_G"/>
</dbReference>
<dbReference type="InterPro" id="IPR029063">
    <property type="entry name" value="SAM-dependent_MTases_sf"/>
</dbReference>
<dbReference type="NCBIfam" id="TIGR00138">
    <property type="entry name" value="rsmG_gidB"/>
    <property type="match status" value="1"/>
</dbReference>
<dbReference type="PANTHER" id="PTHR31760">
    <property type="entry name" value="S-ADENOSYL-L-METHIONINE-DEPENDENT METHYLTRANSFERASES SUPERFAMILY PROTEIN"/>
    <property type="match status" value="1"/>
</dbReference>
<dbReference type="PANTHER" id="PTHR31760:SF0">
    <property type="entry name" value="S-ADENOSYL-L-METHIONINE-DEPENDENT METHYLTRANSFERASES SUPERFAMILY PROTEIN"/>
    <property type="match status" value="1"/>
</dbReference>
<dbReference type="Pfam" id="PF02527">
    <property type="entry name" value="GidB"/>
    <property type="match status" value="1"/>
</dbReference>
<dbReference type="PIRSF" id="PIRSF003078">
    <property type="entry name" value="GidB"/>
    <property type="match status" value="1"/>
</dbReference>
<dbReference type="SUPFAM" id="SSF53335">
    <property type="entry name" value="S-adenosyl-L-methionine-dependent methyltransferases"/>
    <property type="match status" value="1"/>
</dbReference>
<sequence>MRDRDRLLAAFSKDTGITLKPEQIAMIEAYTGLLLDYNQRVNLTAITDREEIWRKHVLDSLLLFLALEIPPAAKVIDIGTGAGIPGLILKIYRPDLEMALLESQNKKVAFLKKAVATLGLQGIECLWGRAEDIGRQKNYRESFDLAVSRGLAGMNTLAEYCLPFVRVGGFMIAYKGPGGEGELNAAARAIEILGGGTKKVWRGSLTGGQEVRQLIIIQKEHPTPPVYPRRPGLPAKRPLQ</sequence>
<accession>Q2RFJ0</accession>
<organism>
    <name type="scientific">Moorella thermoacetica (strain ATCC 39073 / JCM 9320)</name>
    <dbReference type="NCBI Taxonomy" id="264732"/>
    <lineage>
        <taxon>Bacteria</taxon>
        <taxon>Bacillati</taxon>
        <taxon>Bacillota</taxon>
        <taxon>Clostridia</taxon>
        <taxon>Moorellales</taxon>
        <taxon>Moorellaceae</taxon>
        <taxon>Moorella</taxon>
    </lineage>
</organism>
<gene>
    <name evidence="1" type="primary">rsmG</name>
    <name type="ordered locus">Moth_2517</name>
</gene>
<reference key="1">
    <citation type="journal article" date="2008" name="Environ. Microbiol.">
        <title>The complete genome sequence of Moorella thermoacetica (f. Clostridium thermoaceticum).</title>
        <authorList>
            <person name="Pierce E."/>
            <person name="Xie G."/>
            <person name="Barabote R.D."/>
            <person name="Saunders E."/>
            <person name="Han C.S."/>
            <person name="Detter J.C."/>
            <person name="Richardson P."/>
            <person name="Brettin T.S."/>
            <person name="Das A."/>
            <person name="Ljungdahl L.G."/>
            <person name="Ragsdale S.W."/>
        </authorList>
    </citation>
    <scope>NUCLEOTIDE SEQUENCE [LARGE SCALE GENOMIC DNA]</scope>
    <source>
        <strain>ATCC 39073 / JCM 9320</strain>
    </source>
</reference>
<feature type="chain" id="PRO_0000335373" description="Ribosomal RNA small subunit methyltransferase G">
    <location>
        <begin position="1"/>
        <end position="240"/>
    </location>
</feature>
<feature type="binding site" evidence="1">
    <location>
        <position position="79"/>
    </location>
    <ligand>
        <name>S-adenosyl-L-methionine</name>
        <dbReference type="ChEBI" id="CHEBI:59789"/>
    </ligand>
</feature>
<feature type="binding site" evidence="1">
    <location>
        <begin position="130"/>
        <end position="131"/>
    </location>
    <ligand>
        <name>S-adenosyl-L-methionine</name>
        <dbReference type="ChEBI" id="CHEBI:59789"/>
    </ligand>
</feature>
<feature type="binding site" evidence="1">
    <location>
        <position position="149"/>
    </location>
    <ligand>
        <name>S-adenosyl-L-methionine</name>
        <dbReference type="ChEBI" id="CHEBI:59789"/>
    </ligand>
</feature>
<comment type="function">
    <text evidence="1">Specifically methylates the N7 position of a guanine in 16S rRNA.</text>
</comment>
<comment type="subcellular location">
    <subcellularLocation>
        <location evidence="1">Cytoplasm</location>
    </subcellularLocation>
</comment>
<comment type="similarity">
    <text evidence="1">Belongs to the methyltransferase superfamily. RNA methyltransferase RsmG family.</text>
</comment>
<evidence type="ECO:0000255" key="1">
    <source>
        <dbReference type="HAMAP-Rule" id="MF_00074"/>
    </source>
</evidence>